<name>RIBB_ECOLC</name>
<protein>
    <recommendedName>
        <fullName evidence="1">3,4-dihydroxy-2-butanone 4-phosphate synthase</fullName>
        <shortName evidence="1">DHBP synthase</shortName>
        <ecNumber evidence="1">4.1.99.12</ecNumber>
    </recommendedName>
</protein>
<reference key="1">
    <citation type="submission" date="2008-02" db="EMBL/GenBank/DDBJ databases">
        <title>Complete sequence of Escherichia coli C str. ATCC 8739.</title>
        <authorList>
            <person name="Copeland A."/>
            <person name="Lucas S."/>
            <person name="Lapidus A."/>
            <person name="Glavina del Rio T."/>
            <person name="Dalin E."/>
            <person name="Tice H."/>
            <person name="Bruce D."/>
            <person name="Goodwin L."/>
            <person name="Pitluck S."/>
            <person name="Kiss H."/>
            <person name="Brettin T."/>
            <person name="Detter J.C."/>
            <person name="Han C."/>
            <person name="Kuske C.R."/>
            <person name="Schmutz J."/>
            <person name="Larimer F."/>
            <person name="Land M."/>
            <person name="Hauser L."/>
            <person name="Kyrpides N."/>
            <person name="Mikhailova N."/>
            <person name="Ingram L."/>
            <person name="Richardson P."/>
        </authorList>
    </citation>
    <scope>NUCLEOTIDE SEQUENCE [LARGE SCALE GENOMIC DNA]</scope>
    <source>
        <strain>ATCC 8739 / DSM 1576 / NBRC 3972 / NCIMB 8545 / WDCM 00012 / Crooks</strain>
    </source>
</reference>
<dbReference type="EC" id="4.1.99.12" evidence="1"/>
<dbReference type="EMBL" id="CP000946">
    <property type="protein sequence ID" value="ACA76332.1"/>
    <property type="molecule type" value="Genomic_DNA"/>
</dbReference>
<dbReference type="RefSeq" id="WP_001076997.1">
    <property type="nucleotide sequence ID" value="NZ_MTFT01000027.1"/>
</dbReference>
<dbReference type="SMR" id="B1ISB5"/>
<dbReference type="GeneID" id="93778953"/>
<dbReference type="KEGG" id="ecl:EcolC_0656"/>
<dbReference type="HOGENOM" id="CLU_020273_3_0_6"/>
<dbReference type="UniPathway" id="UPA00275">
    <property type="reaction ID" value="UER00399"/>
</dbReference>
<dbReference type="GO" id="GO:0005829">
    <property type="term" value="C:cytosol"/>
    <property type="evidence" value="ECO:0007669"/>
    <property type="project" value="TreeGrafter"/>
</dbReference>
<dbReference type="GO" id="GO:0008686">
    <property type="term" value="F:3,4-dihydroxy-2-butanone-4-phosphate synthase activity"/>
    <property type="evidence" value="ECO:0007669"/>
    <property type="project" value="UniProtKB-UniRule"/>
</dbReference>
<dbReference type="GO" id="GO:0000287">
    <property type="term" value="F:magnesium ion binding"/>
    <property type="evidence" value="ECO:0007669"/>
    <property type="project" value="UniProtKB-UniRule"/>
</dbReference>
<dbReference type="GO" id="GO:0030145">
    <property type="term" value="F:manganese ion binding"/>
    <property type="evidence" value="ECO:0007669"/>
    <property type="project" value="UniProtKB-UniRule"/>
</dbReference>
<dbReference type="GO" id="GO:0009231">
    <property type="term" value="P:riboflavin biosynthetic process"/>
    <property type="evidence" value="ECO:0007669"/>
    <property type="project" value="UniProtKB-UniRule"/>
</dbReference>
<dbReference type="FunFam" id="3.90.870.10:FF:000002">
    <property type="entry name" value="3,4-dihydroxy-2-butanone 4-phosphate synthase"/>
    <property type="match status" value="1"/>
</dbReference>
<dbReference type="Gene3D" id="3.90.870.10">
    <property type="entry name" value="DHBP synthase"/>
    <property type="match status" value="1"/>
</dbReference>
<dbReference type="HAMAP" id="MF_00180">
    <property type="entry name" value="RibB"/>
    <property type="match status" value="1"/>
</dbReference>
<dbReference type="InterPro" id="IPR017945">
    <property type="entry name" value="DHBP_synth_RibB-like_a/b_dom"/>
</dbReference>
<dbReference type="InterPro" id="IPR000422">
    <property type="entry name" value="DHBP_synthase_RibB"/>
</dbReference>
<dbReference type="NCBIfam" id="TIGR00506">
    <property type="entry name" value="ribB"/>
    <property type="match status" value="1"/>
</dbReference>
<dbReference type="PANTHER" id="PTHR21327:SF38">
    <property type="entry name" value="3,4-DIHYDROXY-2-BUTANONE 4-PHOSPHATE SYNTHASE"/>
    <property type="match status" value="1"/>
</dbReference>
<dbReference type="PANTHER" id="PTHR21327">
    <property type="entry name" value="GTP CYCLOHYDROLASE II-RELATED"/>
    <property type="match status" value="1"/>
</dbReference>
<dbReference type="Pfam" id="PF00926">
    <property type="entry name" value="DHBP_synthase"/>
    <property type="match status" value="1"/>
</dbReference>
<dbReference type="SUPFAM" id="SSF55821">
    <property type="entry name" value="YrdC/RibB"/>
    <property type="match status" value="1"/>
</dbReference>
<proteinExistence type="inferred from homology"/>
<feature type="chain" id="PRO_1000077264" description="3,4-dihydroxy-2-butanone 4-phosphate synthase">
    <location>
        <begin position="1"/>
        <end position="217"/>
    </location>
</feature>
<feature type="binding site" evidence="1">
    <location>
        <begin position="37"/>
        <end position="38"/>
    </location>
    <ligand>
        <name>D-ribulose 5-phosphate</name>
        <dbReference type="ChEBI" id="CHEBI:58121"/>
    </ligand>
</feature>
<feature type="binding site" evidence="1">
    <location>
        <position position="38"/>
    </location>
    <ligand>
        <name>Mg(2+)</name>
        <dbReference type="ChEBI" id="CHEBI:18420"/>
        <label>1</label>
    </ligand>
</feature>
<feature type="binding site" evidence="1">
    <location>
        <position position="38"/>
    </location>
    <ligand>
        <name>Mg(2+)</name>
        <dbReference type="ChEBI" id="CHEBI:18420"/>
        <label>2</label>
    </ligand>
</feature>
<feature type="binding site" evidence="1">
    <location>
        <position position="42"/>
    </location>
    <ligand>
        <name>D-ribulose 5-phosphate</name>
        <dbReference type="ChEBI" id="CHEBI:58121"/>
    </ligand>
</feature>
<feature type="binding site" evidence="1">
    <location>
        <begin position="150"/>
        <end position="154"/>
    </location>
    <ligand>
        <name>D-ribulose 5-phosphate</name>
        <dbReference type="ChEBI" id="CHEBI:58121"/>
    </ligand>
</feature>
<feature type="binding site" evidence="1">
    <location>
        <position position="153"/>
    </location>
    <ligand>
        <name>Mg(2+)</name>
        <dbReference type="ChEBI" id="CHEBI:18420"/>
        <label>2</label>
    </ligand>
</feature>
<feature type="binding site" evidence="1">
    <location>
        <position position="174"/>
    </location>
    <ligand>
        <name>D-ribulose 5-phosphate</name>
        <dbReference type="ChEBI" id="CHEBI:58121"/>
    </ligand>
</feature>
<feature type="site" description="Essential for catalytic activity" evidence="1">
    <location>
        <position position="136"/>
    </location>
</feature>
<feature type="site" description="Essential for catalytic activity" evidence="1">
    <location>
        <position position="174"/>
    </location>
</feature>
<keyword id="KW-0456">Lyase</keyword>
<keyword id="KW-0460">Magnesium</keyword>
<keyword id="KW-0464">Manganese</keyword>
<keyword id="KW-0479">Metal-binding</keyword>
<keyword id="KW-0686">Riboflavin biosynthesis</keyword>
<evidence type="ECO:0000255" key="1">
    <source>
        <dbReference type="HAMAP-Rule" id="MF_00180"/>
    </source>
</evidence>
<comment type="function">
    <text evidence="1">Catalyzes the conversion of D-ribulose 5-phosphate to formate and 3,4-dihydroxy-2-butanone 4-phosphate.</text>
</comment>
<comment type="catalytic activity">
    <reaction evidence="1">
        <text>D-ribulose 5-phosphate = (2S)-2-hydroxy-3-oxobutyl phosphate + formate + H(+)</text>
        <dbReference type="Rhea" id="RHEA:18457"/>
        <dbReference type="ChEBI" id="CHEBI:15378"/>
        <dbReference type="ChEBI" id="CHEBI:15740"/>
        <dbReference type="ChEBI" id="CHEBI:58121"/>
        <dbReference type="ChEBI" id="CHEBI:58830"/>
        <dbReference type="EC" id="4.1.99.12"/>
    </reaction>
</comment>
<comment type="cofactor">
    <cofactor evidence="1">
        <name>Mg(2+)</name>
        <dbReference type="ChEBI" id="CHEBI:18420"/>
    </cofactor>
    <cofactor evidence="1">
        <name>Mn(2+)</name>
        <dbReference type="ChEBI" id="CHEBI:29035"/>
    </cofactor>
    <text evidence="1">Binds 2 divalent metal cations per subunit. Magnesium or manganese.</text>
</comment>
<comment type="pathway">
    <text evidence="1">Cofactor biosynthesis; riboflavin biosynthesis; 2-hydroxy-3-oxobutyl phosphate from D-ribulose 5-phosphate: step 1/1.</text>
</comment>
<comment type="subunit">
    <text evidence="1">Homodimer.</text>
</comment>
<comment type="similarity">
    <text evidence="1">Belongs to the DHBP synthase family.</text>
</comment>
<organism>
    <name type="scientific">Escherichia coli (strain ATCC 8739 / DSM 1576 / NBRC 3972 / NCIMB 8545 / WDCM 00012 / Crooks)</name>
    <dbReference type="NCBI Taxonomy" id="481805"/>
    <lineage>
        <taxon>Bacteria</taxon>
        <taxon>Pseudomonadati</taxon>
        <taxon>Pseudomonadota</taxon>
        <taxon>Gammaproteobacteria</taxon>
        <taxon>Enterobacterales</taxon>
        <taxon>Enterobacteriaceae</taxon>
        <taxon>Escherichia</taxon>
    </lineage>
</organism>
<accession>B1ISB5</accession>
<sequence>MNQTLLSSFGTPFERVENALAALREGRGVMVLDDEDRENEGDMIFPAETMTVEQMALTIRHGSGIVCLCITEDRRKQLDLPMMVENNTSAYGTGFTVTIEAAEGVTTGVSAADRITTVRAAIADGAKPSDLNRPGHVFPLRAQAGGVLTRGGHTEATIDLMTLAGFKPAGVLCELTNDDGTMARAPECIEFANKHNMALVTIEDLVAYRQAHERKAS</sequence>
<gene>
    <name evidence="1" type="primary">ribB</name>
    <name type="ordered locus">EcolC_0656</name>
</gene>